<reference key="1">
    <citation type="submission" date="2005-10" db="EMBL/GenBank/DDBJ databases">
        <title>Complete sequence of Pelobacter carbinolicus DSM 2380.</title>
        <authorList>
            <person name="Copeland A."/>
            <person name="Lucas S."/>
            <person name="Lapidus A."/>
            <person name="Barry K."/>
            <person name="Detter J.C."/>
            <person name="Glavina T."/>
            <person name="Hammon N."/>
            <person name="Israni S."/>
            <person name="Pitluck S."/>
            <person name="Chertkov O."/>
            <person name="Schmutz J."/>
            <person name="Larimer F."/>
            <person name="Land M."/>
            <person name="Kyrpides N."/>
            <person name="Ivanova N."/>
            <person name="Richardson P."/>
        </authorList>
    </citation>
    <scope>NUCLEOTIDE SEQUENCE [LARGE SCALE GENOMIC DNA]</scope>
    <source>
        <strain>DSM 2380 / NBRC 103641 / GraBd1</strain>
    </source>
</reference>
<comment type="function">
    <text evidence="1">Catalyzes the one-electron reduction of superoxide anion radical to hydrogen peroxide at a nonheme ferrous iron center. Plays a fundamental role in case of oxidative stress via its superoxide detoxification activity (By similarity).</text>
</comment>
<comment type="catalytic activity">
    <reaction evidence="2">
        <text>reduced [rubredoxin] + superoxide + 2 H(+) = oxidized [rubredoxin] + H2O2</text>
        <dbReference type="Rhea" id="RHEA:21324"/>
        <dbReference type="Rhea" id="RHEA-COMP:10302"/>
        <dbReference type="Rhea" id="RHEA-COMP:10303"/>
        <dbReference type="ChEBI" id="CHEBI:15378"/>
        <dbReference type="ChEBI" id="CHEBI:16240"/>
        <dbReference type="ChEBI" id="CHEBI:18421"/>
        <dbReference type="ChEBI" id="CHEBI:29033"/>
        <dbReference type="ChEBI" id="CHEBI:29034"/>
        <dbReference type="EC" id="1.15.1.2"/>
    </reaction>
</comment>
<comment type="cofactor">
    <cofactor evidence="1">
        <name>Fe(3+)</name>
        <dbReference type="ChEBI" id="CHEBI:29034"/>
    </cofactor>
    <text evidence="1">Binds 1 Fe(3+) ion per subunit. The iron ion 1 is coordinated via 4 cysteine residues.</text>
</comment>
<comment type="cofactor">
    <cofactor evidence="1">
        <name>Cu(2+)</name>
        <dbReference type="ChEBI" id="CHEBI:29036"/>
    </cofactor>
    <text evidence="1">Binds 1 Fe(2+) ion per subunit. The iron ion 2 is coordinated via four histidines and one cysteine residue.</text>
</comment>
<comment type="subunit">
    <text evidence="1">Homodimer.</text>
</comment>
<comment type="domain">
    <text evidence="1">Is organized in two protein domains. The N-terminal domain has a fold similar to that of desulforedoxin and contains a mononuclear Fe(3+) ion, center I. The second domain contains a different mononuclear iron center, center II, with a Fe(2+) ion (By similarity).</text>
</comment>
<comment type="miscellaneous">
    <text evidence="1">Catalysis occurs at center II. Fe(2+) ion of center II is the electron donor and is converted to the Fe(3+) form during the reaction (By similarity).</text>
</comment>
<comment type="similarity">
    <text evidence="3">Belongs to the desulfoferrodoxin family.</text>
</comment>
<sequence length="126" mass="13878">MAEKLEVYKCELCGNIVEVLHGGAGELVCCGKPMNLLNENTVDAAKEKHVPVIEKTNDGIIVKVGSVAHPMEEKHFIQWIELIANGKAYRQHLSPGDKPEACFPLITGPLKVREYCNLHGLWSSEG</sequence>
<feature type="chain" id="PRO_0000244870" description="Desulfoferrodoxin">
    <location>
        <begin position="1"/>
        <end position="126"/>
    </location>
</feature>
<feature type="binding site" evidence="1">
    <location>
        <position position="10"/>
    </location>
    <ligand>
        <name>Fe cation</name>
        <dbReference type="ChEBI" id="CHEBI:24875"/>
        <label>1</label>
    </ligand>
</feature>
<feature type="binding site" evidence="1">
    <location>
        <position position="13"/>
    </location>
    <ligand>
        <name>Fe cation</name>
        <dbReference type="ChEBI" id="CHEBI:24875"/>
        <label>1</label>
    </ligand>
</feature>
<feature type="binding site" evidence="1">
    <location>
        <position position="29"/>
    </location>
    <ligand>
        <name>Fe cation</name>
        <dbReference type="ChEBI" id="CHEBI:24875"/>
        <label>1</label>
    </ligand>
</feature>
<feature type="binding site" evidence="1">
    <location>
        <position position="30"/>
    </location>
    <ligand>
        <name>Fe cation</name>
        <dbReference type="ChEBI" id="CHEBI:24875"/>
        <label>1</label>
    </ligand>
</feature>
<feature type="binding site" evidence="1">
    <location>
        <position position="49"/>
    </location>
    <ligand>
        <name>Fe cation</name>
        <dbReference type="ChEBI" id="CHEBI:24875"/>
        <label>2</label>
        <note>catalytic</note>
    </ligand>
</feature>
<feature type="binding site" evidence="1">
    <location>
        <position position="69"/>
    </location>
    <ligand>
        <name>Fe cation</name>
        <dbReference type="ChEBI" id="CHEBI:24875"/>
        <label>2</label>
        <note>catalytic</note>
    </ligand>
</feature>
<feature type="binding site" evidence="1">
    <location>
        <position position="75"/>
    </location>
    <ligand>
        <name>Fe cation</name>
        <dbReference type="ChEBI" id="CHEBI:24875"/>
        <label>2</label>
        <note>catalytic</note>
    </ligand>
</feature>
<feature type="binding site" evidence="1">
    <location>
        <position position="116"/>
    </location>
    <ligand>
        <name>Fe cation</name>
        <dbReference type="ChEBI" id="CHEBI:24875"/>
        <label>2</label>
        <note>catalytic</note>
    </ligand>
</feature>
<feature type="binding site" evidence="1">
    <location>
        <position position="119"/>
    </location>
    <ligand>
        <name>Fe cation</name>
        <dbReference type="ChEBI" id="CHEBI:24875"/>
        <label>2</label>
        <note>catalytic</note>
    </ligand>
</feature>
<evidence type="ECO:0000250" key="1"/>
<evidence type="ECO:0000250" key="2">
    <source>
        <dbReference type="UniProtKB" id="Q97GB9"/>
    </source>
</evidence>
<evidence type="ECO:0000305" key="3"/>
<protein>
    <recommendedName>
        <fullName>Desulfoferrodoxin</fullName>
        <shortName>Dfx</shortName>
        <ecNumber>1.15.1.2</ecNumber>
    </recommendedName>
    <alternativeName>
        <fullName>Superoxide reductase</fullName>
        <shortName>SOR</shortName>
    </alternativeName>
</protein>
<organism>
    <name type="scientific">Syntrophotalea carbinolica (strain DSM 2380 / NBRC 103641 / GraBd1)</name>
    <name type="common">Pelobacter carbinolicus</name>
    <dbReference type="NCBI Taxonomy" id="338963"/>
    <lineage>
        <taxon>Bacteria</taxon>
        <taxon>Pseudomonadati</taxon>
        <taxon>Thermodesulfobacteriota</taxon>
        <taxon>Desulfuromonadia</taxon>
        <taxon>Desulfuromonadales</taxon>
        <taxon>Syntrophotaleaceae</taxon>
        <taxon>Syntrophotalea</taxon>
    </lineage>
</organism>
<gene>
    <name type="primary">dfx</name>
    <name type="ordered locus">Pcar_2347</name>
</gene>
<keyword id="KW-0216">Detoxification</keyword>
<keyword id="KW-0249">Electron transport</keyword>
<keyword id="KW-0408">Iron</keyword>
<keyword id="KW-0479">Metal-binding</keyword>
<keyword id="KW-0560">Oxidoreductase</keyword>
<keyword id="KW-1185">Reference proteome</keyword>
<keyword id="KW-0813">Transport</keyword>
<accession>Q3A221</accession>
<name>DFX_SYNC1</name>
<proteinExistence type="inferred from homology"/>
<dbReference type="EC" id="1.15.1.2"/>
<dbReference type="EMBL" id="CP000142">
    <property type="protein sequence ID" value="ABA89586.1"/>
    <property type="molecule type" value="Genomic_DNA"/>
</dbReference>
<dbReference type="RefSeq" id="WP_011342108.1">
    <property type="nucleotide sequence ID" value="NC_007498.2"/>
</dbReference>
<dbReference type="SMR" id="Q3A221"/>
<dbReference type="STRING" id="338963.Pcar_2347"/>
<dbReference type="KEGG" id="pca:Pcar_2347"/>
<dbReference type="eggNOG" id="COG2033">
    <property type="taxonomic scope" value="Bacteria"/>
</dbReference>
<dbReference type="HOGENOM" id="CLU_118960_1_0_7"/>
<dbReference type="OrthoDB" id="9814936at2"/>
<dbReference type="Proteomes" id="UP000002534">
    <property type="component" value="Chromosome"/>
</dbReference>
<dbReference type="GO" id="GO:0005506">
    <property type="term" value="F:iron ion binding"/>
    <property type="evidence" value="ECO:0007669"/>
    <property type="project" value="InterPro"/>
</dbReference>
<dbReference type="GO" id="GO:0050605">
    <property type="term" value="F:superoxide reductase activity"/>
    <property type="evidence" value="ECO:0007669"/>
    <property type="project" value="UniProtKB-EC"/>
</dbReference>
<dbReference type="GO" id="GO:0019430">
    <property type="term" value="P:removal of superoxide radicals"/>
    <property type="evidence" value="ECO:0007669"/>
    <property type="project" value="InterPro"/>
</dbReference>
<dbReference type="CDD" id="cd00974">
    <property type="entry name" value="DSRD"/>
    <property type="match status" value="1"/>
</dbReference>
<dbReference type="CDD" id="cd03171">
    <property type="entry name" value="SORL_Dfx_classI"/>
    <property type="match status" value="1"/>
</dbReference>
<dbReference type="Gene3D" id="2.20.28.100">
    <property type="entry name" value="Desulphoferrodoxin, N-terminal domain"/>
    <property type="match status" value="1"/>
</dbReference>
<dbReference type="Gene3D" id="2.60.40.730">
    <property type="entry name" value="SOR catalytic domain"/>
    <property type="match status" value="1"/>
</dbReference>
<dbReference type="InterPro" id="IPR002742">
    <property type="entry name" value="Desulfoferrodoxin_Fe-bd_dom"/>
</dbReference>
<dbReference type="InterPro" id="IPR036073">
    <property type="entry name" value="Desulfoferrodoxin_Fe-bd_dom_sf"/>
</dbReference>
<dbReference type="InterPro" id="IPR004462">
    <property type="entry name" value="Desulfoferrodoxin_N"/>
</dbReference>
<dbReference type="InterPro" id="IPR038094">
    <property type="entry name" value="Desulfoferrodoxin_N_sf"/>
</dbReference>
<dbReference type="InterPro" id="IPR004793">
    <property type="entry name" value="Desulfoferrodoxin_rbo"/>
</dbReference>
<dbReference type="InterPro" id="IPR051233">
    <property type="entry name" value="Desulfoferrodoxin_SOR"/>
</dbReference>
<dbReference type="NCBIfam" id="TIGR00319">
    <property type="entry name" value="desulf_FeS4"/>
    <property type="match status" value="1"/>
</dbReference>
<dbReference type="NCBIfam" id="TIGR00320">
    <property type="entry name" value="dfx_rbo"/>
    <property type="match status" value="1"/>
</dbReference>
<dbReference type="NCBIfam" id="TIGR00332">
    <property type="entry name" value="neela_ferrous"/>
    <property type="match status" value="1"/>
</dbReference>
<dbReference type="PANTHER" id="PTHR36541">
    <property type="entry name" value="SUPEROXIDE REDUCTASE-RELATED"/>
    <property type="match status" value="1"/>
</dbReference>
<dbReference type="PANTHER" id="PTHR36541:SF1">
    <property type="entry name" value="SUPEROXIDE REDUCTASE-RELATED"/>
    <property type="match status" value="1"/>
</dbReference>
<dbReference type="Pfam" id="PF06397">
    <property type="entry name" value="Desulfoferrod_N"/>
    <property type="match status" value="1"/>
</dbReference>
<dbReference type="Pfam" id="PF01880">
    <property type="entry name" value="Desulfoferrodox"/>
    <property type="match status" value="1"/>
</dbReference>
<dbReference type="SUPFAM" id="SSF57802">
    <property type="entry name" value="Rubredoxin-like"/>
    <property type="match status" value="1"/>
</dbReference>
<dbReference type="SUPFAM" id="SSF49367">
    <property type="entry name" value="Superoxide reductase-like"/>
    <property type="match status" value="1"/>
</dbReference>